<evidence type="ECO:0000250" key="1">
    <source>
        <dbReference type="UniProtKB" id="P02918"/>
    </source>
</evidence>
<evidence type="ECO:0000250" key="2">
    <source>
        <dbReference type="UniProtKB" id="P02919"/>
    </source>
</evidence>
<evidence type="ECO:0000256" key="3">
    <source>
        <dbReference type="SAM" id="MobiDB-lite"/>
    </source>
</evidence>
<evidence type="ECO:0000269" key="4">
    <source>
    </source>
</evidence>
<evidence type="ECO:0000269" key="5">
    <source>
    </source>
</evidence>
<evidence type="ECO:0000303" key="6">
    <source>
    </source>
</evidence>
<evidence type="ECO:0000303" key="7">
    <source>
    </source>
</evidence>
<evidence type="ECO:0000305" key="8"/>
<evidence type="ECO:0007829" key="9">
    <source>
        <dbReference type="PDB" id="2C5W"/>
    </source>
</evidence>
<evidence type="ECO:0007829" key="10">
    <source>
        <dbReference type="PDB" id="2C6W"/>
    </source>
</evidence>
<sequence>MNKPTILRLIKYLSISFLSLVIAAIVLGGGVFFYYVSKAPSLSESKLVATTSSKIYDNKNQLIADLGSERRVNAQANDIPTDLVKAIVSIEDHRFFDHRGIDTIRILGAFLRNLQSNSLQGGSALTQQLIKLTYFSTSTSDQTISRKAQEAWLAIQLEQKATKQEILTYYINKVYMSNGNYGMQTAAQNYYGKDLNNLSLPQLALLAGMPQAPNQYDPYSHPEAAQDRRNLVLSEMKNQGYISAEQYEKAVNTPITDGLQSLKSASNYPAYMDNYLKEVINQVEEETGYNLLTTGMDVYTNVDQEAQKHLWDIYNTDEYVAYPDDELQVASTIVDVSNGKVIAQLGARHQSSNVSFGINQAVETNRDWGSTMKPITDYAPALEYGVYESTATIVHDEPYNYPGTNTPVYNWDRGYFGNITLQYALQQSRNVPAVETLNKVGLNRAKTFLNGLGIDYPSIHYSNAISSNTTESDKKYGASSEKMAAAYAAFANGGTYYKPMYIHKVVFSDGSEKEFSNVGTRAMKETTAYMMTDMMKTVLSYGTGRNAYLAWLPQAGKTGTSNYTDEEIENHIKTSQFVAPDELFAGYTRKYSMAVWTGYSNRLTPLVGNGLTVAAKVYRSMMTYLSEGSNPEDWNIPEGLYRNGEFVFKNGARSTWSSPAPQQPPSTESSSSSSDSSTSQSSSTTPSTNNSTTTNPNNNTQQSNTTPDQQNQNPQPAQP</sequence>
<name>PBPA_STRR6</name>
<comment type="function">
    <text>Cell wall formation.</text>
</comment>
<comment type="catalytic activity">
    <reaction evidence="1">
        <text>[GlcNAc-(1-&gt;4)-Mur2Ac(oyl-L-Ala-gamma-D-Glu-L-Lys-D-Ala-D-Ala)](n)-di-trans,octa-cis-undecaprenyl diphosphate + beta-D-GlcNAc-(1-&gt;4)-Mur2Ac(oyl-L-Ala-gamma-D-Glu-L-Lys-D-Ala-D-Ala)-di-trans,octa-cis-undecaprenyl diphosphate = [GlcNAc-(1-&gt;4)-Mur2Ac(oyl-L-Ala-gamma-D-Glu-L-Lys-D-Ala-D-Ala)](n+1)-di-trans,octa-cis-undecaprenyl diphosphate + di-trans,octa-cis-undecaprenyl diphosphate + H(+)</text>
        <dbReference type="Rhea" id="RHEA:23708"/>
        <dbReference type="Rhea" id="RHEA-COMP:9602"/>
        <dbReference type="Rhea" id="RHEA-COMP:9603"/>
        <dbReference type="ChEBI" id="CHEBI:15378"/>
        <dbReference type="ChEBI" id="CHEBI:58405"/>
        <dbReference type="ChEBI" id="CHEBI:60033"/>
        <dbReference type="ChEBI" id="CHEBI:78435"/>
        <dbReference type="EC" id="2.4.99.28"/>
    </reaction>
</comment>
<comment type="catalytic activity">
    <reaction evidence="1">
        <text>Preferential cleavage: (Ac)2-L-Lys-D-Ala-|-D-Ala. Also transpeptidation of peptidyl-alanyl moieties that are N-acyl substituents of D-alanine.</text>
        <dbReference type="EC" id="3.4.16.4"/>
    </reaction>
</comment>
<comment type="pathway">
    <text>Cell wall biogenesis; peptidoglycan biosynthesis.</text>
</comment>
<comment type="subunit">
    <text evidence="4">Interacts with MreC in the elongasome.</text>
</comment>
<comment type="subcellular location">
    <subcellularLocation>
        <location>Secreted</location>
    </subcellularLocation>
</comment>
<comment type="disruption phenotype">
    <text evidence="5">Not essential, it can be deleted.</text>
</comment>
<comment type="similarity">
    <text evidence="8">In the N-terminal section; belongs to the glycosyltransferase 51 family.</text>
</comment>
<comment type="similarity">
    <text evidence="8">In the C-terminal section; belongs to the transpeptidase family.</text>
</comment>
<proteinExistence type="evidence at protein level"/>
<organism>
    <name type="scientific">Streptococcus pneumoniae (strain ATCC BAA-255 / R6)</name>
    <dbReference type="NCBI Taxonomy" id="171101"/>
    <lineage>
        <taxon>Bacteria</taxon>
        <taxon>Bacillati</taxon>
        <taxon>Bacillota</taxon>
        <taxon>Bacilli</taxon>
        <taxon>Lactobacillales</taxon>
        <taxon>Streptococcaceae</taxon>
        <taxon>Streptococcus</taxon>
    </lineage>
</organism>
<reference key="1">
    <citation type="journal article" date="1992" name="J. Bacteriol.">
        <title>Nucleotide sequences of genes encoding penicillin-binding proteins from Streptococcus pneumoniae and Streptococcus oralis with high homology to Escherichia coli penicillin-binding proteins 1a and 1b.</title>
        <authorList>
            <person name="Martin C."/>
            <person name="Briese T."/>
            <person name="Hakenbeck R."/>
        </authorList>
    </citation>
    <scope>NUCLEOTIDE SEQUENCE [GENOMIC DNA]</scope>
</reference>
<reference key="2">
    <citation type="journal article" date="2001" name="J. Bacteriol.">
        <title>Genome of the bacterium Streptococcus pneumoniae strain R6.</title>
        <authorList>
            <person name="Hoskins J."/>
            <person name="Alborn W.E. Jr."/>
            <person name="Arnold J."/>
            <person name="Blaszczak L.C."/>
            <person name="Burgett S."/>
            <person name="DeHoff B.S."/>
            <person name="Estrem S.T."/>
            <person name="Fritz L."/>
            <person name="Fu D.-J."/>
            <person name="Fuller W."/>
            <person name="Geringer C."/>
            <person name="Gilmour R."/>
            <person name="Glass J.S."/>
            <person name="Khoja H."/>
            <person name="Kraft A.R."/>
            <person name="Lagace R.E."/>
            <person name="LeBlanc D.J."/>
            <person name="Lee L.N."/>
            <person name="Lefkowitz E.J."/>
            <person name="Lu J."/>
            <person name="Matsushima P."/>
            <person name="McAhren S.M."/>
            <person name="McHenney M."/>
            <person name="McLeaster K."/>
            <person name="Mundy C.W."/>
            <person name="Nicas T.I."/>
            <person name="Norris F.H."/>
            <person name="O'Gara M."/>
            <person name="Peery R.B."/>
            <person name="Robertson G.T."/>
            <person name="Rockey P."/>
            <person name="Sun P.-M."/>
            <person name="Winkler M.E."/>
            <person name="Yang Y."/>
            <person name="Young-Bellido M."/>
            <person name="Zhao G."/>
            <person name="Zook C.A."/>
            <person name="Baltz R.H."/>
            <person name="Jaskunas S.R."/>
            <person name="Rosteck P.R. Jr."/>
            <person name="Skatrud P.L."/>
            <person name="Glass J.I."/>
        </authorList>
    </citation>
    <scope>NUCLEOTIDE SEQUENCE [LARGE SCALE GENOMIC DNA]</scope>
    <source>
        <strain>ATCC BAA-255 / R6</strain>
    </source>
</reference>
<reference key="3">
    <citation type="journal article" date="1993" name="Mol. Microbiol.">
        <title>Genetic identification of exported proteins in Streptococcus pneumoniae.</title>
        <authorList>
            <person name="Pearce B.J."/>
            <person name="Yin Y.B."/>
            <person name="Masure H.R."/>
        </authorList>
    </citation>
    <scope>NUCLEOTIDE SEQUENCE [GENOMIC DNA] OF 293-369</scope>
    <source>
        <strain>R6X</strain>
    </source>
</reference>
<reference key="4">
    <citation type="journal article" date="1993" name="FEMS Microbiol. Lett.">
        <title>Deletion analysis of the essentiality of penicillin-binding proteins 1A, 2B and 2X of Streptococcus pneumoniae.</title>
        <authorList>
            <person name="Kell C.M."/>
            <person name="Sharma U.K."/>
            <person name="Dowson C.G."/>
            <person name="Town C."/>
            <person name="Balganesh T.S."/>
            <person name="Spratt B.G."/>
        </authorList>
    </citation>
    <scope>DISRUPTION PHENOTYPE</scope>
    <source>
        <strain>ATCC BAA-255 / R6</strain>
    </source>
</reference>
<reference key="5">
    <citation type="journal article" date="2017" name="Mol. Microbiol.">
        <title>Identification of EloR (Spr1851) as a regulator of cell elongation in Streptococcus pneumoniae.</title>
        <authorList>
            <person name="Stamsaas G.A."/>
            <person name="Straume D."/>
            <person name="Ruud Winther A."/>
            <person name="Kjos M."/>
            <person name="Frantzen C.A."/>
            <person name="Haavarstein L.S."/>
        </authorList>
    </citation>
    <scope>SUBUNIT</scope>
    <source>
        <strain>R6 / R704</strain>
    </source>
</reference>
<gene>
    <name type="primary">pbpA</name>
    <name evidence="7" type="synonym">exp2</name>
    <name evidence="6" type="synonym">ponA</name>
    <name type="ordered locus">spr0329</name>
</gene>
<keyword id="KW-0002">3D-structure</keyword>
<keyword id="KW-0046">Antibiotic resistance</keyword>
<keyword id="KW-0121">Carboxypeptidase</keyword>
<keyword id="KW-0133">Cell shape</keyword>
<keyword id="KW-0961">Cell wall biogenesis/degradation</keyword>
<keyword id="KW-0328">Glycosyltransferase</keyword>
<keyword id="KW-0378">Hydrolase</keyword>
<keyword id="KW-0511">Multifunctional enzyme</keyword>
<keyword id="KW-0573">Peptidoglycan synthesis</keyword>
<keyword id="KW-0645">Protease</keyword>
<keyword id="KW-1185">Reference proteome</keyword>
<keyword id="KW-0964">Secreted</keyword>
<keyword id="KW-0808">Transferase</keyword>
<dbReference type="EC" id="2.4.99.28" evidence="1"/>
<dbReference type="EC" id="3.4.16.4" evidence="1"/>
<dbReference type="EMBL" id="M90527">
    <property type="protein sequence ID" value="AAA26956.1"/>
    <property type="molecule type" value="Genomic_DNA"/>
</dbReference>
<dbReference type="EMBL" id="AE007317">
    <property type="protein sequence ID" value="AAK99133.1"/>
    <property type="molecule type" value="Genomic_DNA"/>
</dbReference>
<dbReference type="PIR" id="A42893">
    <property type="entry name" value="A42893"/>
</dbReference>
<dbReference type="PIR" id="A97913">
    <property type="entry name" value="A97913"/>
</dbReference>
<dbReference type="RefSeq" id="NP_357923.1">
    <property type="nucleotide sequence ID" value="NC_003098.1"/>
</dbReference>
<dbReference type="RefSeq" id="WP_001039991.1">
    <property type="nucleotide sequence ID" value="NC_003098.1"/>
</dbReference>
<dbReference type="PDB" id="2C5W">
    <property type="method" value="X-ray"/>
    <property type="resolution" value="2.55 A"/>
    <property type="chains" value="A=51-66, B=266-650"/>
</dbReference>
<dbReference type="PDB" id="2C6W">
    <property type="method" value="X-ray"/>
    <property type="resolution" value="2.61 A"/>
    <property type="chains" value="A=51-66, B=267-650"/>
</dbReference>
<dbReference type="PDB" id="2V2F">
    <property type="method" value="X-ray"/>
    <property type="resolution" value="1.90 A"/>
    <property type="chains" value="A=47-70"/>
</dbReference>
<dbReference type="PDB" id="2ZC5">
    <property type="method" value="X-ray"/>
    <property type="resolution" value="3.00 A"/>
    <property type="chains" value="A/C=47-70"/>
</dbReference>
<dbReference type="PDB" id="2ZC6">
    <property type="method" value="X-ray"/>
    <property type="resolution" value="2.70 A"/>
    <property type="chains" value="A/C=47-70"/>
</dbReference>
<dbReference type="PDBsum" id="2C5W"/>
<dbReference type="PDBsum" id="2C6W"/>
<dbReference type="PDBsum" id="2V2F"/>
<dbReference type="PDBsum" id="2ZC5"/>
<dbReference type="PDBsum" id="2ZC6"/>
<dbReference type="SMR" id="Q8DR59"/>
<dbReference type="BioGRID" id="4182173">
    <property type="interactions" value="1"/>
</dbReference>
<dbReference type="STRING" id="171101.spr0329"/>
<dbReference type="DrugBank" id="DB08375">
    <property type="generic name" value="(2R)-2-[(1R)-1-[[(2Z)-2-(2-Amino-1,3-thiazol-4-yl)-2-methoxyiminoacetyl]amino]-2-oxoethyl]-5-methylidene-2H-1,3-thiazine-4-carboxylic acid"/>
</dbReference>
<dbReference type="DrugBank" id="DB01163">
    <property type="generic name" value="Amdinocillin"/>
</dbReference>
<dbReference type="DrugBank" id="DB00415">
    <property type="generic name" value="Ampicillin"/>
</dbReference>
<dbReference type="DrugBank" id="DB08795">
    <property type="generic name" value="Azidocillin"/>
</dbReference>
<dbReference type="DrugBank" id="DB01140">
    <property type="generic name" value="Cefadroxil"/>
</dbReference>
<dbReference type="DrugBank" id="DB00456">
    <property type="generic name" value="Cefalotin"/>
</dbReference>
<dbReference type="DrugBank" id="DB00493">
    <property type="generic name" value="Cefotaxime"/>
</dbReference>
<dbReference type="DrugBank" id="DB01331">
    <property type="generic name" value="Cefoxitin"/>
</dbReference>
<dbReference type="DrugBank" id="DB00567">
    <property type="generic name" value="Cephalexin"/>
</dbReference>
<dbReference type="DrugBank" id="DB03313">
    <property type="generic name" value="Cephalosporin C"/>
</dbReference>
<dbReference type="DrugBank" id="DB01147">
    <property type="generic name" value="Cloxacillin"/>
</dbReference>
<dbReference type="DrugBank" id="DB01000">
    <property type="generic name" value="Cyclacillin"/>
</dbReference>
<dbReference type="DrugBank" id="DB00485">
    <property type="generic name" value="Dicloxacillin"/>
</dbReference>
<dbReference type="DrugBank" id="DB00739">
    <property type="generic name" value="Hetacillin"/>
</dbReference>
<dbReference type="DrugBank" id="DB01603">
    <property type="generic name" value="Meticillin"/>
</dbReference>
<dbReference type="DrugBank" id="DB00607">
    <property type="generic name" value="Nafcillin"/>
</dbReference>
<dbReference type="DrugBank" id="DB00713">
    <property type="generic name" value="Oxacillin"/>
</dbReference>
<dbReference type="CAZy" id="GT51">
    <property type="family name" value="Glycosyltransferase Family 51"/>
</dbReference>
<dbReference type="KEGG" id="spr:spr0329"/>
<dbReference type="PATRIC" id="fig|171101.6.peg.368"/>
<dbReference type="eggNOG" id="COG0744">
    <property type="taxonomic scope" value="Bacteria"/>
</dbReference>
<dbReference type="HOGENOM" id="CLU_006354_2_5_9"/>
<dbReference type="UniPathway" id="UPA00219"/>
<dbReference type="EvolutionaryTrace" id="Q8DR59"/>
<dbReference type="Proteomes" id="UP000000586">
    <property type="component" value="Chromosome"/>
</dbReference>
<dbReference type="GO" id="GO:0005576">
    <property type="term" value="C:extracellular region"/>
    <property type="evidence" value="ECO:0007669"/>
    <property type="project" value="UniProtKB-SubCell"/>
</dbReference>
<dbReference type="GO" id="GO:0030288">
    <property type="term" value="C:outer membrane-bounded periplasmic space"/>
    <property type="evidence" value="ECO:0000318"/>
    <property type="project" value="GO_Central"/>
</dbReference>
<dbReference type="GO" id="GO:0008658">
    <property type="term" value="F:penicillin binding"/>
    <property type="evidence" value="ECO:0007669"/>
    <property type="project" value="InterPro"/>
</dbReference>
<dbReference type="GO" id="GO:0008955">
    <property type="term" value="F:peptidoglycan glycosyltransferase activity"/>
    <property type="evidence" value="ECO:0000318"/>
    <property type="project" value="GO_Central"/>
</dbReference>
<dbReference type="GO" id="GO:0009002">
    <property type="term" value="F:serine-type D-Ala-D-Ala carboxypeptidase activity"/>
    <property type="evidence" value="ECO:0007669"/>
    <property type="project" value="UniProtKB-EC"/>
</dbReference>
<dbReference type="GO" id="GO:0071555">
    <property type="term" value="P:cell wall organization"/>
    <property type="evidence" value="ECO:0007669"/>
    <property type="project" value="UniProtKB-KW"/>
</dbReference>
<dbReference type="GO" id="GO:0009252">
    <property type="term" value="P:peptidoglycan biosynthetic process"/>
    <property type="evidence" value="ECO:0000318"/>
    <property type="project" value="GO_Central"/>
</dbReference>
<dbReference type="GO" id="GO:0006508">
    <property type="term" value="P:proteolysis"/>
    <property type="evidence" value="ECO:0007669"/>
    <property type="project" value="UniProtKB-KW"/>
</dbReference>
<dbReference type="GO" id="GO:0008360">
    <property type="term" value="P:regulation of cell shape"/>
    <property type="evidence" value="ECO:0007669"/>
    <property type="project" value="UniProtKB-KW"/>
</dbReference>
<dbReference type="GO" id="GO:0046677">
    <property type="term" value="P:response to antibiotic"/>
    <property type="evidence" value="ECO:0007669"/>
    <property type="project" value="UniProtKB-KW"/>
</dbReference>
<dbReference type="FunFam" id="1.10.3810.10:FF:000001">
    <property type="entry name" value="Penicillin-binding protein 1A"/>
    <property type="match status" value="1"/>
</dbReference>
<dbReference type="FunFam" id="3.40.710.10:FF:000020">
    <property type="entry name" value="Penicillin-binding protein 1A"/>
    <property type="match status" value="1"/>
</dbReference>
<dbReference type="Gene3D" id="1.10.3810.10">
    <property type="entry name" value="Biosynthetic peptidoglycan transglycosylase-like"/>
    <property type="match status" value="1"/>
</dbReference>
<dbReference type="Gene3D" id="3.40.710.10">
    <property type="entry name" value="DD-peptidase/beta-lactamase superfamily"/>
    <property type="match status" value="1"/>
</dbReference>
<dbReference type="InterPro" id="IPR012338">
    <property type="entry name" value="Beta-lactam/transpept-like"/>
</dbReference>
<dbReference type="InterPro" id="IPR001264">
    <property type="entry name" value="Glyco_trans_51"/>
</dbReference>
<dbReference type="InterPro" id="IPR050396">
    <property type="entry name" value="Glycosyltr_51/Transpeptidase"/>
</dbReference>
<dbReference type="InterPro" id="IPR023346">
    <property type="entry name" value="Lysozyme-like_dom_sf"/>
</dbReference>
<dbReference type="InterPro" id="IPR036950">
    <property type="entry name" value="PBP_transglycosylase"/>
</dbReference>
<dbReference type="InterPro" id="IPR001460">
    <property type="entry name" value="PCN-bd_Tpept"/>
</dbReference>
<dbReference type="NCBIfam" id="TIGR02074">
    <property type="entry name" value="PBP_1a_fam"/>
    <property type="match status" value="1"/>
</dbReference>
<dbReference type="NCBIfam" id="NF038272">
    <property type="entry name" value="strep_PBP1A"/>
    <property type="match status" value="1"/>
</dbReference>
<dbReference type="PANTHER" id="PTHR32282">
    <property type="entry name" value="BINDING PROTEIN TRANSPEPTIDASE, PUTATIVE-RELATED"/>
    <property type="match status" value="1"/>
</dbReference>
<dbReference type="PANTHER" id="PTHR32282:SF29">
    <property type="entry name" value="PENICILLIN-BINDING PROTEIN 1A"/>
    <property type="match status" value="1"/>
</dbReference>
<dbReference type="Pfam" id="PF00912">
    <property type="entry name" value="Transgly"/>
    <property type="match status" value="1"/>
</dbReference>
<dbReference type="Pfam" id="PF00905">
    <property type="entry name" value="Transpeptidase"/>
    <property type="match status" value="1"/>
</dbReference>
<dbReference type="SUPFAM" id="SSF56601">
    <property type="entry name" value="beta-lactamase/transpeptidase-like"/>
    <property type="match status" value="1"/>
</dbReference>
<dbReference type="SUPFAM" id="SSF53955">
    <property type="entry name" value="Lysozyme-like"/>
    <property type="match status" value="1"/>
</dbReference>
<feature type="chain" id="PRO_0000083183" description="Penicillin-binding protein 1A">
    <location>
        <begin position="1"/>
        <end position="719"/>
    </location>
</feature>
<feature type="region of interest" description="Transglycosylase" evidence="2">
    <location>
        <begin position="62"/>
        <end position="223"/>
    </location>
</feature>
<feature type="region of interest" description="Transpeptidase" evidence="2">
    <location>
        <begin position="297"/>
        <end position="611"/>
    </location>
</feature>
<feature type="region of interest" description="Disordered" evidence="3">
    <location>
        <begin position="652"/>
        <end position="719"/>
    </location>
</feature>
<feature type="compositionally biased region" description="Low complexity" evidence="3">
    <location>
        <begin position="654"/>
        <end position="719"/>
    </location>
</feature>
<feature type="active site" description="Proton donor; for transglycosylase activity" evidence="2">
    <location>
        <position position="91"/>
    </location>
</feature>
<feature type="active site" description="Acyl-ester intermediate; for transpeptidase activity" evidence="2">
    <location>
        <position position="370"/>
    </location>
</feature>
<feature type="strand" evidence="9">
    <location>
        <begin position="54"/>
        <end position="56"/>
    </location>
</feature>
<feature type="strand" evidence="9">
    <location>
        <begin position="62"/>
        <end position="65"/>
    </location>
</feature>
<feature type="helix" evidence="9">
    <location>
        <begin position="270"/>
        <end position="272"/>
    </location>
</feature>
<feature type="helix" evidence="9">
    <location>
        <begin position="273"/>
        <end position="287"/>
    </location>
</feature>
<feature type="turn" evidence="9">
    <location>
        <begin position="291"/>
        <end position="293"/>
    </location>
</feature>
<feature type="strand" evidence="9">
    <location>
        <begin position="296"/>
        <end position="300"/>
    </location>
</feature>
<feature type="helix" evidence="9">
    <location>
        <begin position="304"/>
        <end position="315"/>
    </location>
</feature>
<feature type="strand" evidence="9">
    <location>
        <begin position="317"/>
        <end position="319"/>
    </location>
</feature>
<feature type="strand" evidence="10">
    <location>
        <begin position="323"/>
        <end position="325"/>
    </location>
</feature>
<feature type="strand" evidence="9">
    <location>
        <begin position="328"/>
        <end position="335"/>
    </location>
</feature>
<feature type="turn" evidence="9">
    <location>
        <begin position="336"/>
        <end position="338"/>
    </location>
</feature>
<feature type="strand" evidence="9">
    <location>
        <begin position="340"/>
        <end position="345"/>
    </location>
</feature>
<feature type="turn" evidence="9">
    <location>
        <begin position="360"/>
        <end position="362"/>
    </location>
</feature>
<feature type="helix" evidence="9">
    <location>
        <begin position="369"/>
        <end position="371"/>
    </location>
</feature>
<feature type="helix" evidence="9">
    <location>
        <begin position="372"/>
        <end position="376"/>
    </location>
</feature>
<feature type="helix" evidence="9">
    <location>
        <begin position="378"/>
        <end position="383"/>
    </location>
</feature>
<feature type="strand" evidence="9">
    <location>
        <begin position="388"/>
        <end position="391"/>
    </location>
</feature>
<feature type="strand" evidence="9">
    <location>
        <begin position="393"/>
        <end position="398"/>
    </location>
</feature>
<feature type="strand" evidence="9">
    <location>
        <begin position="417"/>
        <end position="420"/>
    </location>
</feature>
<feature type="helix" evidence="9">
    <location>
        <begin position="421"/>
        <end position="426"/>
    </location>
</feature>
<feature type="helix" evidence="9">
    <location>
        <begin position="430"/>
        <end position="440"/>
    </location>
</feature>
<feature type="helix" evidence="9">
    <location>
        <begin position="442"/>
        <end position="450"/>
    </location>
</feature>
<feature type="turn" evidence="9">
    <location>
        <begin position="451"/>
        <end position="453"/>
    </location>
</feature>
<feature type="helix" evidence="9">
    <location>
        <begin position="461"/>
        <end position="464"/>
    </location>
</feature>
<feature type="strand" evidence="9">
    <location>
        <begin position="474"/>
        <end position="477"/>
    </location>
</feature>
<feature type="helix" evidence="9">
    <location>
        <begin position="480"/>
        <end position="491"/>
    </location>
</feature>
<feature type="strand" evidence="9">
    <location>
        <begin position="494"/>
        <end position="497"/>
    </location>
</feature>
<feature type="strand" evidence="9">
    <location>
        <begin position="500"/>
        <end position="507"/>
    </location>
</feature>
<feature type="strand" evidence="9">
    <location>
        <begin position="512"/>
        <end position="514"/>
    </location>
</feature>
<feature type="strand" evidence="9">
    <location>
        <begin position="519"/>
        <end position="521"/>
    </location>
</feature>
<feature type="helix" evidence="9">
    <location>
        <begin position="525"/>
        <end position="541"/>
    </location>
</feature>
<feature type="helix" evidence="9">
    <location>
        <begin position="545"/>
        <end position="547"/>
    </location>
</feature>
<feature type="strand" evidence="9">
    <location>
        <begin position="555"/>
        <end position="560"/>
    </location>
</feature>
<feature type="helix" evidence="9">
    <location>
        <begin position="565"/>
        <end position="570"/>
    </location>
</feature>
<feature type="strand" evidence="9">
    <location>
        <begin position="578"/>
        <end position="580"/>
    </location>
</feature>
<feature type="strand" evidence="9">
    <location>
        <begin position="582"/>
        <end position="587"/>
    </location>
</feature>
<feature type="strand" evidence="9">
    <location>
        <begin position="589"/>
        <end position="598"/>
    </location>
</feature>
<feature type="helix" evidence="9">
    <location>
        <begin position="608"/>
        <end position="612"/>
    </location>
</feature>
<feature type="helix" evidence="9">
    <location>
        <begin position="613"/>
        <end position="626"/>
    </location>
</feature>
<feature type="strand" evidence="9">
    <location>
        <begin position="627"/>
        <end position="629"/>
    </location>
</feature>
<feature type="strand" evidence="9">
    <location>
        <begin position="640"/>
        <end position="643"/>
    </location>
</feature>
<feature type="strand" evidence="9">
    <location>
        <begin position="646"/>
        <end position="649"/>
    </location>
</feature>
<protein>
    <recommendedName>
        <fullName>Penicillin-binding protein 1A</fullName>
        <shortName>PBP-1A</shortName>
    </recommendedName>
    <alternativeName>
        <fullName>Exported protein 2</fullName>
    </alternativeName>
    <domain>
        <recommendedName>
            <fullName>Penicillin-insensitive transglycosylase</fullName>
            <ecNumber evidence="1">2.4.99.28</ecNumber>
        </recommendedName>
        <alternativeName>
            <fullName>Peptidoglycan TGase</fullName>
        </alternativeName>
    </domain>
    <domain>
        <recommendedName>
            <fullName>Penicillin-sensitive transpeptidase</fullName>
            <ecNumber evidence="1">3.4.16.4</ecNumber>
        </recommendedName>
        <alternativeName>
            <fullName>DD-transpeptidase</fullName>
        </alternativeName>
    </domain>
</protein>
<accession>Q8DR59</accession>